<keyword id="KW-0027">Amidation</keyword>
<keyword id="KW-0165">Cleavage on pair of basic residues</keyword>
<keyword id="KW-0903">Direct protein sequencing</keyword>
<keyword id="KW-1015">Disulfide bond</keyword>
<keyword id="KW-0325">Glycoprotein</keyword>
<keyword id="KW-0372">Hormone</keyword>
<keyword id="KW-1185">Reference proteome</keyword>
<keyword id="KW-0964">Secreted</keyword>
<keyword id="KW-0838">Vasoactive</keyword>
<keyword id="KW-0839">Vasoconstrictor</keyword>
<sequence>CYFQNCPRGXXXAMSDLELRQCLPCGPGGKGRCFGPSICCGDELGCFVGTAEALRCQEEIYLPSPCQSGQKPCGSGGRCAAAGICCNDESCVTEPECREGIGFPRRVXASDRSNATLLDGPSGALLLRLVQLAAAPEPAEPAQPGVY</sequence>
<proteinExistence type="evidence at protein level"/>
<organism>
    <name type="scientific">Ovis aries</name>
    <name type="common">Sheep</name>
    <dbReference type="NCBI Taxonomy" id="9940"/>
    <lineage>
        <taxon>Eukaryota</taxon>
        <taxon>Metazoa</taxon>
        <taxon>Chordata</taxon>
        <taxon>Craniata</taxon>
        <taxon>Vertebrata</taxon>
        <taxon>Euteleostomi</taxon>
        <taxon>Mammalia</taxon>
        <taxon>Eutheria</taxon>
        <taxon>Laurasiatheria</taxon>
        <taxon>Artiodactyla</taxon>
        <taxon>Ruminantia</taxon>
        <taxon>Pecora</taxon>
        <taxon>Bovidae</taxon>
        <taxon>Caprinae</taxon>
        <taxon>Ovis</taxon>
    </lineage>
</organism>
<reference key="1">
    <citation type="journal article" date="1959" name="C. R. Hebd. Seances Acad. Sci., D, Sci. Nat.">
        <title>Purification and structure of sheep oxytocin and vasopressin.</title>
        <authorList>
            <person name="Acher R."/>
            <person name="Chauvet J."/>
            <person name="Lenci M.T."/>
        </authorList>
    </citation>
    <scope>PROTEIN SEQUENCE OF 1-9</scope>
    <scope>AMIDATION AT GLY-9</scope>
</reference>
<reference key="2">
    <citation type="journal article" date="1976" name="Eur. J. Biochem.">
        <title>The neurohypophysial hormone-binding protein: complete amino-acid sequence of ovine and bovine MSEL-neurophysins.</title>
        <authorList>
            <person name="Chauvet M.-T."/>
            <person name="Chauvet J."/>
            <person name="Acher R."/>
        </authorList>
    </citation>
    <scope>PROTEIN SEQUENCE OF 13-107</scope>
</reference>
<reference key="3">
    <citation type="journal article" date="1975" name="FEBS Lett.">
        <title>Complete amino acid sequence of ovine neurophysin-III.</title>
        <authorList>
            <person name="Schlesinger D.H."/>
            <person name="Ernst M."/>
            <person name="Nicholas A."/>
            <person name="Watkins W.B."/>
            <person name="Walter R."/>
        </authorList>
    </citation>
    <scope>PROTEIN SEQUENCE OF 13-107</scope>
</reference>
<reference key="4">
    <citation type="journal article" date="1979" name="Biochem. Biophys. Res. Commun.">
        <title>A new glycopeptide in pig, ox and sheep pituitary.</title>
        <authorList>
            <person name="Smyth D.G."/>
            <person name="Massey D.E."/>
        </authorList>
    </citation>
    <scope>PROTEIN SEQUENCE OF 109-147</scope>
</reference>
<name>NEU2_SHEEP</name>
<protein>
    <recommendedName>
        <fullName>Vasopressin-neurophysin 2-copeptin</fullName>
    </recommendedName>
    <alternativeName>
        <fullName>AVP-NPII</fullName>
    </alternativeName>
    <component>
        <recommendedName>
            <fullName>Arg-vasopressin</fullName>
        </recommendedName>
        <alternativeName>
            <fullName>Arginine-vasopressin</fullName>
        </alternativeName>
    </component>
    <component>
        <recommendedName>
            <fullName>Neurophysin 2</fullName>
        </recommendedName>
        <alternativeName>
            <fullName>Neurophysin-III</fullName>
        </alternativeName>
    </component>
    <component>
        <recommendedName>
            <fullName>Copeptin</fullName>
        </recommendedName>
    </component>
</protein>
<evidence type="ECO:0000250" key="1">
    <source>
        <dbReference type="UniProtKB" id="P01175"/>
    </source>
</evidence>
<evidence type="ECO:0000250" key="2">
    <source>
        <dbReference type="UniProtKB" id="P01185"/>
    </source>
</evidence>
<evidence type="ECO:0000269" key="3">
    <source ref="1"/>
</evidence>
<evidence type="ECO:0000305" key="4"/>
<comment type="function">
    <text>Neurophysin 2 specifically binds vasopressin.</text>
</comment>
<comment type="function">
    <text evidence="2">Vasopressin has a direct antidiuretic action on the kidney, it also causes vasoconstriction of the peripheral vessels. Acts by binding to vasopressin receptors (V1bR/AVPR1B, V1aR/AVPR1A, and V2R/AVPR2) (By similarity).</text>
</comment>
<comment type="subunit">
    <text evidence="2">Interacts with vasopressin receptors V1bR/AVPR1B (Ki=85 pM), V1aR/AVPR1A (Ki=0.6 nM) and V2R/AVPR2 (Ki=4.9 nM) (By similarity). Interacts with oxytocin receptor (OXTR) (Ki=110 nM) (By similarity).</text>
</comment>
<comment type="subcellular location">
    <subcellularLocation>
        <location>Secreted</location>
    </subcellularLocation>
</comment>
<comment type="miscellaneous">
    <text>X's have been placed at positions 10-12 and 108 by homology with the complete sequence of the bovine precursor.</text>
</comment>
<comment type="similarity">
    <text evidence="4">Belongs to the vasopressin/oxytocin family.</text>
</comment>
<accession>P01181</accession>
<dbReference type="PIR" id="B90737">
    <property type="entry name" value="NVSH2"/>
</dbReference>
<dbReference type="GlyCosmos" id="P01181">
    <property type="glycosylation" value="1 site, No reported glycans"/>
</dbReference>
<dbReference type="Proteomes" id="UP000002356">
    <property type="component" value="Unplaced"/>
</dbReference>
<dbReference type="GO" id="GO:0005615">
    <property type="term" value="C:extracellular space"/>
    <property type="evidence" value="ECO:0007669"/>
    <property type="project" value="TreeGrafter"/>
</dbReference>
<dbReference type="GO" id="GO:0030141">
    <property type="term" value="C:secretory granule"/>
    <property type="evidence" value="ECO:0007669"/>
    <property type="project" value="TreeGrafter"/>
</dbReference>
<dbReference type="GO" id="GO:0005185">
    <property type="term" value="F:neurohypophyseal hormone activity"/>
    <property type="evidence" value="ECO:0007669"/>
    <property type="project" value="InterPro"/>
</dbReference>
<dbReference type="GO" id="GO:0031894">
    <property type="term" value="F:V1A vasopressin receptor binding"/>
    <property type="evidence" value="ECO:0007669"/>
    <property type="project" value="TreeGrafter"/>
</dbReference>
<dbReference type="GO" id="GO:0042310">
    <property type="term" value="P:vasoconstriction"/>
    <property type="evidence" value="ECO:0007669"/>
    <property type="project" value="UniProtKB-KW"/>
</dbReference>
<dbReference type="FunFam" id="2.60.9.10:FF:000001">
    <property type="entry name" value="oxytocin-neurophysin 1"/>
    <property type="match status" value="1"/>
</dbReference>
<dbReference type="Gene3D" id="2.60.9.10">
    <property type="entry name" value="Neurohypophysial hormone domain"/>
    <property type="match status" value="1"/>
</dbReference>
<dbReference type="InterPro" id="IPR000981">
    <property type="entry name" value="Neurhyp_horm"/>
</dbReference>
<dbReference type="InterPro" id="IPR036387">
    <property type="entry name" value="Neurhyp_horm_dom_sf"/>
</dbReference>
<dbReference type="InterPro" id="IPR022423">
    <property type="entry name" value="Neurohypophysial_hormone_CS"/>
</dbReference>
<dbReference type="PANTHER" id="PTHR11681">
    <property type="entry name" value="NEUROPHYSIN"/>
    <property type="match status" value="1"/>
</dbReference>
<dbReference type="PANTHER" id="PTHR11681:SF9">
    <property type="entry name" value="VASOPRESSIN-NEUROPHYSIN 2-COPEPTIN"/>
    <property type="match status" value="1"/>
</dbReference>
<dbReference type="Pfam" id="PF00220">
    <property type="entry name" value="Hormone_4"/>
    <property type="match status" value="1"/>
</dbReference>
<dbReference type="Pfam" id="PF00184">
    <property type="entry name" value="Hormone_5"/>
    <property type="match status" value="1"/>
</dbReference>
<dbReference type="PIRSF" id="PIRSF001815">
    <property type="entry name" value="Nonapeptide_hormone_precursor"/>
    <property type="match status" value="1"/>
</dbReference>
<dbReference type="PRINTS" id="PR00831">
    <property type="entry name" value="NEUROPHYSIN"/>
</dbReference>
<dbReference type="SMART" id="SM00003">
    <property type="entry name" value="NH"/>
    <property type="match status" value="1"/>
</dbReference>
<dbReference type="SUPFAM" id="SSF49606">
    <property type="entry name" value="Neurophysin II"/>
    <property type="match status" value="1"/>
</dbReference>
<dbReference type="PROSITE" id="PS00264">
    <property type="entry name" value="NEUROHYPOPHYS_HORM"/>
    <property type="match status" value="1"/>
</dbReference>
<gene>
    <name type="primary">AVP</name>
</gene>
<feature type="peptide" id="PRO_0000020527" description="Arg-vasopressin">
    <location>
        <begin position="1"/>
        <end position="9"/>
    </location>
</feature>
<feature type="chain" id="PRO_0000020528" description="Neurophysin 2">
    <location>
        <begin position="13"/>
        <end position="107"/>
    </location>
</feature>
<feature type="peptide" id="PRO_0000020529" description="Copeptin">
    <location>
        <begin position="109"/>
        <end position="147"/>
    </location>
</feature>
<feature type="site" description="Important for agonist activity on V1aR/AVPR1A" evidence="2">
    <location>
        <position position="9"/>
    </location>
</feature>
<feature type="modified residue" description="Glycine amide" evidence="3">
    <location>
        <position position="9"/>
    </location>
</feature>
<feature type="glycosylation site" description="N-linked (GlcNAc...) asparagine">
    <location>
        <position position="114"/>
    </location>
</feature>
<feature type="disulfide bond">
    <location>
        <begin position="1"/>
        <end position="6"/>
    </location>
</feature>
<feature type="disulfide bond" evidence="1">
    <location>
        <begin position="22"/>
        <end position="66"/>
    </location>
</feature>
<feature type="disulfide bond" evidence="1">
    <location>
        <begin position="25"/>
        <end position="39"/>
    </location>
</feature>
<feature type="disulfide bond" evidence="1">
    <location>
        <begin position="33"/>
        <end position="56"/>
    </location>
</feature>
<feature type="disulfide bond" evidence="1">
    <location>
        <begin position="40"/>
        <end position="46"/>
    </location>
</feature>
<feature type="disulfide bond" evidence="1">
    <location>
        <begin position="73"/>
        <end position="85"/>
    </location>
</feature>
<feature type="disulfide bond" evidence="1">
    <location>
        <begin position="79"/>
        <end position="97"/>
    </location>
</feature>
<feature type="disulfide bond" evidence="1">
    <location>
        <begin position="86"/>
        <end position="91"/>
    </location>
</feature>
<feature type="sequence conflict" description="In Ref. 3; AA sequence." evidence="4" ref="3">
    <location>
        <position position="105"/>
    </location>
</feature>
<feature type="non-terminal residue">
    <location>
        <position position="1"/>
    </location>
</feature>